<feature type="chain" id="PRO_0000274412" description="SH3 and cysteine-rich domain-containing protein">
    <location>
        <begin position="1"/>
        <end position="403"/>
    </location>
</feature>
<feature type="domain" description="SH3 1" evidence="2">
    <location>
        <begin position="286"/>
        <end position="345"/>
    </location>
</feature>
<feature type="domain" description="SH3 2" evidence="2">
    <location>
        <begin position="348"/>
        <end position="403"/>
    </location>
</feature>
<feature type="zinc finger region" description="Phorbol-ester/DAG-type" evidence="3">
    <location>
        <begin position="108"/>
        <end position="160"/>
    </location>
</feature>
<feature type="region of interest" description="Disordered" evidence="4">
    <location>
        <begin position="1"/>
        <end position="43"/>
    </location>
</feature>
<feature type="region of interest" description="Disordered" evidence="4">
    <location>
        <begin position="212"/>
        <end position="253"/>
    </location>
</feature>
<feature type="compositionally biased region" description="Polar residues" evidence="4">
    <location>
        <begin position="21"/>
        <end position="36"/>
    </location>
</feature>
<comment type="function">
    <text evidence="1">Promotes expression of the ion channel CACNA1H at the cell membrane, and thereby contributes to the regulation of channel activity. Plays a minor and redundant role in promoting the expression of calcium channel CACNA1S at the cell membrane, and thereby contributes to increased channel activity. Slows down the inactivation rate of the calcium channel CACNA1C.</text>
</comment>
<comment type="subunit">
    <text evidence="1">Interacts (via SH3 domains) with CACNA1S. Interacts with CACNA1H. Interacts with CACNA1C.</text>
</comment>
<comment type="subcellular location">
    <subcellularLocation>
        <location evidence="1">Cytoplasm</location>
        <location evidence="1">Cytosol</location>
    </subcellularLocation>
    <subcellularLocation>
        <location evidence="1">Cell membrane</location>
        <topology evidence="1">Peripheral membrane protein</topology>
        <orientation evidence="1">Cytoplasmic side</orientation>
    </subcellularLocation>
    <subcellularLocation>
        <location evidence="1">Cell membrane</location>
        <location evidence="1">Sarcolemma</location>
        <topology evidence="1">Peripheral membrane protein</topology>
        <orientation evidence="1">Cytoplasmic side</orientation>
    </subcellularLocation>
</comment>
<keyword id="KW-1003">Cell membrane</keyword>
<keyword id="KW-0963">Cytoplasm</keyword>
<keyword id="KW-0472">Membrane</keyword>
<keyword id="KW-0479">Metal-binding</keyword>
<keyword id="KW-1185">Reference proteome</keyword>
<keyword id="KW-0677">Repeat</keyword>
<keyword id="KW-0728">SH3 domain</keyword>
<keyword id="KW-0862">Zinc</keyword>
<keyword id="KW-0863">Zinc-finger</keyword>
<accession>A0JNJ1</accession>
<evidence type="ECO:0000250" key="1">
    <source>
        <dbReference type="UniProtKB" id="P97306"/>
    </source>
</evidence>
<evidence type="ECO:0000255" key="2">
    <source>
        <dbReference type="PROSITE-ProRule" id="PRU00192"/>
    </source>
</evidence>
<evidence type="ECO:0000255" key="3">
    <source>
        <dbReference type="PROSITE-ProRule" id="PRU00226"/>
    </source>
</evidence>
<evidence type="ECO:0000256" key="4">
    <source>
        <dbReference type="SAM" id="MobiDB-lite"/>
    </source>
</evidence>
<dbReference type="EMBL" id="BC126707">
    <property type="protein sequence ID" value="AAI26708.1"/>
    <property type="molecule type" value="mRNA"/>
</dbReference>
<dbReference type="RefSeq" id="NP_001071430.1">
    <property type="nucleotide sequence ID" value="NM_001077962.2"/>
</dbReference>
<dbReference type="SMR" id="A0JNJ1"/>
<dbReference type="FunCoup" id="A0JNJ1">
    <property type="interactions" value="382"/>
</dbReference>
<dbReference type="STRING" id="9913.ENSBTAP00000008854"/>
<dbReference type="PaxDb" id="9913-ENSBTAP00000008854"/>
<dbReference type="GeneID" id="524215"/>
<dbReference type="KEGG" id="bta:524215"/>
<dbReference type="CTD" id="6769"/>
<dbReference type="VEuPathDB" id="HostDB:ENSBTAG00000006735"/>
<dbReference type="eggNOG" id="ENOG502QW0M">
    <property type="taxonomic scope" value="Eukaryota"/>
</dbReference>
<dbReference type="InParanoid" id="A0JNJ1"/>
<dbReference type="OMA" id="IYRCVRT"/>
<dbReference type="OrthoDB" id="9991832at2759"/>
<dbReference type="Proteomes" id="UP000009136">
    <property type="component" value="Chromosome 22"/>
</dbReference>
<dbReference type="Bgee" id="ENSBTAG00000006735">
    <property type="expression patterns" value="Expressed in urethra and 98 other cell types or tissues"/>
</dbReference>
<dbReference type="GO" id="GO:0009898">
    <property type="term" value="C:cytoplasmic side of plasma membrane"/>
    <property type="evidence" value="ECO:0000250"/>
    <property type="project" value="UniProtKB"/>
</dbReference>
<dbReference type="GO" id="GO:0005829">
    <property type="term" value="C:cytosol"/>
    <property type="evidence" value="ECO:0007669"/>
    <property type="project" value="UniProtKB-SubCell"/>
</dbReference>
<dbReference type="GO" id="GO:0042383">
    <property type="term" value="C:sarcolemma"/>
    <property type="evidence" value="ECO:0007669"/>
    <property type="project" value="UniProtKB-SubCell"/>
</dbReference>
<dbReference type="GO" id="GO:0044325">
    <property type="term" value="F:transmembrane transporter binding"/>
    <property type="evidence" value="ECO:0000318"/>
    <property type="project" value="GO_Central"/>
</dbReference>
<dbReference type="GO" id="GO:0008270">
    <property type="term" value="F:zinc ion binding"/>
    <property type="evidence" value="ECO:0007669"/>
    <property type="project" value="UniProtKB-KW"/>
</dbReference>
<dbReference type="GO" id="GO:2001259">
    <property type="term" value="P:positive regulation of cation channel activity"/>
    <property type="evidence" value="ECO:0000250"/>
    <property type="project" value="UniProtKB"/>
</dbReference>
<dbReference type="GO" id="GO:1903078">
    <property type="term" value="P:positive regulation of protein localization to plasma membrane"/>
    <property type="evidence" value="ECO:0000250"/>
    <property type="project" value="UniProtKB"/>
</dbReference>
<dbReference type="GO" id="GO:1901387">
    <property type="term" value="P:positive regulation of voltage-gated calcium channel activity"/>
    <property type="evidence" value="ECO:0000250"/>
    <property type="project" value="UniProtKB"/>
</dbReference>
<dbReference type="GO" id="GO:0003009">
    <property type="term" value="P:skeletal muscle contraction"/>
    <property type="evidence" value="ECO:0000318"/>
    <property type="project" value="GO_Central"/>
</dbReference>
<dbReference type="CDD" id="cd20880">
    <property type="entry name" value="C1_Stac1"/>
    <property type="match status" value="1"/>
</dbReference>
<dbReference type="CDD" id="cd11833">
    <property type="entry name" value="SH3_Stac_1"/>
    <property type="match status" value="1"/>
</dbReference>
<dbReference type="FunFam" id="3.30.60.20:FF:000044">
    <property type="entry name" value="SH3 and cysteine-rich domain-containing protein"/>
    <property type="match status" value="1"/>
</dbReference>
<dbReference type="FunFam" id="2.30.30.40:FF:000073">
    <property type="entry name" value="SH3 and cysteine-rich domain-containing protein 2"/>
    <property type="match status" value="1"/>
</dbReference>
<dbReference type="Gene3D" id="3.30.60.20">
    <property type="match status" value="1"/>
</dbReference>
<dbReference type="Gene3D" id="2.30.30.40">
    <property type="entry name" value="SH3 Domains"/>
    <property type="match status" value="1"/>
</dbReference>
<dbReference type="InterPro" id="IPR046349">
    <property type="entry name" value="C1-like_sf"/>
</dbReference>
<dbReference type="InterPro" id="IPR002219">
    <property type="entry name" value="PE/DAG-bd"/>
</dbReference>
<dbReference type="InterPro" id="IPR036028">
    <property type="entry name" value="SH3-like_dom_sf"/>
</dbReference>
<dbReference type="InterPro" id="IPR001452">
    <property type="entry name" value="SH3_domain"/>
</dbReference>
<dbReference type="InterPro" id="IPR039688">
    <property type="entry name" value="STAC1/2/3"/>
</dbReference>
<dbReference type="InterPro" id="IPR035508">
    <property type="entry name" value="STAC1_SH3"/>
</dbReference>
<dbReference type="PANTHER" id="PTHR15135:SF3">
    <property type="entry name" value="SH3 AND CYSTEINE-RICH DOMAIN-CONTAINING PROTEIN"/>
    <property type="match status" value="1"/>
</dbReference>
<dbReference type="PANTHER" id="PTHR15135">
    <property type="entry name" value="STAC"/>
    <property type="match status" value="1"/>
</dbReference>
<dbReference type="Pfam" id="PF00130">
    <property type="entry name" value="C1_1"/>
    <property type="match status" value="1"/>
</dbReference>
<dbReference type="Pfam" id="PF00018">
    <property type="entry name" value="SH3_1"/>
    <property type="match status" value="1"/>
</dbReference>
<dbReference type="Pfam" id="PF07653">
    <property type="entry name" value="SH3_2"/>
    <property type="match status" value="1"/>
</dbReference>
<dbReference type="Pfam" id="PF16664">
    <property type="entry name" value="STAC2_u1"/>
    <property type="match status" value="1"/>
</dbReference>
<dbReference type="PRINTS" id="PR00452">
    <property type="entry name" value="SH3DOMAIN"/>
</dbReference>
<dbReference type="PRINTS" id="PR01887">
    <property type="entry name" value="SPECTRNALPHA"/>
</dbReference>
<dbReference type="SMART" id="SM00109">
    <property type="entry name" value="C1"/>
    <property type="match status" value="1"/>
</dbReference>
<dbReference type="SMART" id="SM00326">
    <property type="entry name" value="SH3"/>
    <property type="match status" value="2"/>
</dbReference>
<dbReference type="SUPFAM" id="SSF57889">
    <property type="entry name" value="Cysteine-rich domain"/>
    <property type="match status" value="1"/>
</dbReference>
<dbReference type="SUPFAM" id="SSF50044">
    <property type="entry name" value="SH3-domain"/>
    <property type="match status" value="1"/>
</dbReference>
<dbReference type="PROSITE" id="PS50002">
    <property type="entry name" value="SH3"/>
    <property type="match status" value="2"/>
</dbReference>
<dbReference type="PROSITE" id="PS00479">
    <property type="entry name" value="ZF_DAG_PE_1"/>
    <property type="match status" value="1"/>
</dbReference>
<dbReference type="PROSITE" id="PS50081">
    <property type="entry name" value="ZF_DAG_PE_2"/>
    <property type="match status" value="1"/>
</dbReference>
<reference key="1">
    <citation type="submission" date="2006-10" db="EMBL/GenBank/DDBJ databases">
        <authorList>
            <consortium name="NIH - Mammalian Gene Collection (MGC) project"/>
        </authorList>
    </citation>
    <scope>NUCLEOTIDE SEQUENCE [LARGE SCALE MRNA]</scope>
    <source>
        <strain>Hereford</strain>
        <tissue>Hypothalamus</tissue>
    </source>
</reference>
<organism>
    <name type="scientific">Bos taurus</name>
    <name type="common">Bovine</name>
    <dbReference type="NCBI Taxonomy" id="9913"/>
    <lineage>
        <taxon>Eukaryota</taxon>
        <taxon>Metazoa</taxon>
        <taxon>Chordata</taxon>
        <taxon>Craniata</taxon>
        <taxon>Vertebrata</taxon>
        <taxon>Euteleostomi</taxon>
        <taxon>Mammalia</taxon>
        <taxon>Eutheria</taxon>
        <taxon>Laurasiatheria</taxon>
        <taxon>Artiodactyla</taxon>
        <taxon>Ruminantia</taxon>
        <taxon>Pecora</taxon>
        <taxon>Bovidae</taxon>
        <taxon>Bovinae</taxon>
        <taxon>Bos</taxon>
    </lineage>
</organism>
<sequence>MIPPSGAREDGVDGLPKETASAEQPPSPASTGSQESKLQKLKRSLSFKTKSLRSKSADNFFQRTNSDVKLQADVLAGVSPGSSPLPAPGSLTCTPTRAGLYPGGGGKAHAFQEHIFKKPTFCDVCNHMIVGTNAKHGLRCKACKMSIHHKCMDGLAPQRCMGKLPKGFRRYYSSPLLIHEQFGCIKEVMPIACGNKVDPVYETLRFGTSLAQRTKKSSSGSGSDSPHRTSTSDLVEVPEEADGPGDGYDLRKRSNSVFTYPENGTDDFRDQAKNINHQGPLSKDPLQMNTYVALYKFVPQENEDLEMRPGDMITLLEDSNEDWWKGKIQDRIGFFPANFVQRVHQNEKIFRCVRTFSGCKEQGQITLKENQICVASEEEQDGFIRVLSGKKRGLVPLDVLENI</sequence>
<name>STAC_BOVIN</name>
<gene>
    <name type="primary">STAC</name>
</gene>
<proteinExistence type="evidence at transcript level"/>
<protein>
    <recommendedName>
        <fullName>SH3 and cysteine-rich domain-containing protein</fullName>
    </recommendedName>
    <alternativeName>
        <fullName>Src homology 3 and cysteine-rich domain-containing protein</fullName>
    </alternativeName>
</protein>